<protein>
    <recommendedName>
        <fullName evidence="5">Delta(6)-protoilludene synthase STEHIDRAFT_64702</fullName>
        <ecNumber evidence="4">4.2.3.-</ecNumber>
        <ecNumber evidence="3 4">4.2.3.135</ecNumber>
        <ecNumber evidence="4">4.2.3.198</ecNumber>
    </recommendedName>
    <alternativeName>
        <fullName evidence="5">Terpene cyclase STEHIDRAFT_64702</fullName>
    </alternativeName>
</protein>
<comment type="function">
    <text evidence="3 4">Terpene cyclase that catalyzes the cyclization of farnesyl diphosphate (FPP) to delta(6)-protoilludene (PubMed:24166732, PubMed:26239156). In presence of Ca(2+), a significant switch from 1,11 to a dual 1,11/1,10 cyclization occurs, producing beta-elemene as the major product, with lower levels of delta(6)-protoilludene and (E)-beta-caryophyllene, and traces of beta-selinene and alpha-selinene (PubMed:26239156).</text>
</comment>
<comment type="catalytic activity">
    <reaction evidence="3 4">
        <text>(2E,6E)-farnesyl diphosphate = Delta(6)-protoilludene + diphosphate</text>
        <dbReference type="Rhea" id="RHEA:34695"/>
        <dbReference type="ChEBI" id="CHEBI:33019"/>
        <dbReference type="ChEBI" id="CHEBI:68655"/>
        <dbReference type="ChEBI" id="CHEBI:175763"/>
        <dbReference type="EC" id="4.2.3.135"/>
    </reaction>
    <physiologicalReaction direction="left-to-right" evidence="3 4">
        <dbReference type="Rhea" id="RHEA:34696"/>
    </physiologicalReaction>
</comment>
<comment type="catalytic activity">
    <reaction evidence="4">
        <text>(2E,6E)-farnesyl diphosphate = alpha-selinene + diphosphate</text>
        <dbReference type="Rhea" id="RHEA:47052"/>
        <dbReference type="ChEBI" id="CHEBI:33019"/>
        <dbReference type="ChEBI" id="CHEBI:59961"/>
        <dbReference type="ChEBI" id="CHEBI:175763"/>
        <dbReference type="EC" id="4.2.3.198"/>
    </reaction>
    <physiologicalReaction direction="left-to-right" evidence="4">
        <dbReference type="Rhea" id="RHEA:47053"/>
    </physiologicalReaction>
</comment>
<comment type="cofactor">
    <cofactor evidence="3">
        <name>Mg(2+)</name>
        <dbReference type="ChEBI" id="CHEBI:18420"/>
    </cofactor>
    <cofactor evidence="3">
        <name>Mn(2+)</name>
        <dbReference type="ChEBI" id="CHEBI:29035"/>
    </cofactor>
    <cofactor evidence="3">
        <name>Ca(2+)</name>
        <dbReference type="ChEBI" id="CHEBI:29108"/>
    </cofactor>
    <cofactor evidence="3">
        <name>Ni(2+)</name>
        <dbReference type="ChEBI" id="CHEBI:49786"/>
    </cofactor>
    <cofactor evidence="3">
        <name>Co(2+)</name>
        <dbReference type="ChEBI" id="CHEBI:48828"/>
    </cofactor>
    <text evidence="4">Mg(2+) and Mn(2+) are more tightly associated with the active site motifs (D(D/E)XX(D/E) and NSE) and thus lead to more efficient removal of PPi.</text>
</comment>
<comment type="activity regulation">
    <text evidence="4">Ca(2+) switches the cyclization mechanism of delta(6)-protoilludene synthase from 1,11 to 1,10 cyclization which leads to the production of beta-elemene.</text>
</comment>
<comment type="biophysicochemical properties">
    <kinetics>
        <KM evidence="3">1.91 uM for farnesyl diphosphate (FPP)</KM>
        <KM evidence="4">22.3 uM for Mg(2+)</KM>
        <KM evidence="4">4.9 uM for Mn(2+)</KM>
        <KM evidence="4">2.9 uM for Ca(2+)</KM>
        <KM evidence="4">24.4 uM for Ni(2+)</KM>
        <KM evidence="4">23.8 uM for Co(2+)</KM>
    </kinetics>
</comment>
<comment type="domain">
    <text evidence="4">The 2 conserved active-site motifs D(D/E)XX(D/E) and NSE are required for coordinating the divalent metal ions that stabilize the PPi moiety of the substrate.</text>
</comment>
<comment type="similarity">
    <text evidence="6">Belongs to the terpene synthase family.</text>
</comment>
<comment type="sequence caution" evidence="3">
    <conflict type="erroneous gene model prediction">
        <sequence resource="EMBL-CDS" id="EIM82223"/>
    </conflict>
</comment>
<gene>
    <name type="ORF">STEHIDRAFT_64702</name>
</gene>
<reference key="1">
    <citation type="journal article" date="2012" name="Science">
        <title>The Paleozoic origin of enzymatic lignin decomposition reconstructed from 31 fungal genomes.</title>
        <authorList>
            <person name="Floudas D."/>
            <person name="Binder M."/>
            <person name="Riley R."/>
            <person name="Barry K."/>
            <person name="Blanchette R.A."/>
            <person name="Henrissat B."/>
            <person name="Martinez A.T."/>
            <person name="Otillar R."/>
            <person name="Spatafora J.W."/>
            <person name="Yadav J.S."/>
            <person name="Aerts A."/>
            <person name="Benoit I."/>
            <person name="Boyd A."/>
            <person name="Carlson A."/>
            <person name="Copeland A."/>
            <person name="Coutinho P.M."/>
            <person name="de Vries R.P."/>
            <person name="Ferreira P."/>
            <person name="Findley K."/>
            <person name="Foster B."/>
            <person name="Gaskell J."/>
            <person name="Glotzer D."/>
            <person name="Gorecki P."/>
            <person name="Heitman J."/>
            <person name="Hesse C."/>
            <person name="Hori C."/>
            <person name="Igarashi K."/>
            <person name="Jurgens J.A."/>
            <person name="Kallen N."/>
            <person name="Kersten P."/>
            <person name="Kohler A."/>
            <person name="Kuees U."/>
            <person name="Kumar T.K.A."/>
            <person name="Kuo A."/>
            <person name="LaButti K."/>
            <person name="Larrondo L.F."/>
            <person name="Lindquist E."/>
            <person name="Ling A."/>
            <person name="Lombard V."/>
            <person name="Lucas S."/>
            <person name="Lundell T."/>
            <person name="Martin R."/>
            <person name="McLaughlin D.J."/>
            <person name="Morgenstern I."/>
            <person name="Morin E."/>
            <person name="Murat C."/>
            <person name="Nagy L.G."/>
            <person name="Nolan M."/>
            <person name="Ohm R.A."/>
            <person name="Patyshakuliyeva A."/>
            <person name="Rokas A."/>
            <person name="Ruiz-Duenas F.J."/>
            <person name="Sabat G."/>
            <person name="Salamov A."/>
            <person name="Samejima M."/>
            <person name="Schmutz J."/>
            <person name="Slot J.C."/>
            <person name="St John F."/>
            <person name="Stenlid J."/>
            <person name="Sun H."/>
            <person name="Sun S."/>
            <person name="Syed K."/>
            <person name="Tsang A."/>
            <person name="Wiebenga A."/>
            <person name="Young D."/>
            <person name="Pisabarro A."/>
            <person name="Eastwood D.C."/>
            <person name="Martin F."/>
            <person name="Cullen D."/>
            <person name="Grigoriev I.V."/>
            <person name="Hibbett D.S."/>
        </authorList>
    </citation>
    <scope>NUCLEOTIDE SEQUENCE [LARGE SCALE GENOMIC DNA]</scope>
    <source>
        <strain>FP-91666</strain>
    </source>
</reference>
<reference key="2">
    <citation type="journal article" date="2013" name="ChemBioChem">
        <title>Mushroom hunting by using bioinformatics: application of a predictive framework facilitates the selective identification of sesquiterpene synthases in basidiomycota.</title>
        <authorList>
            <person name="Quin M.B."/>
            <person name="Flynn C.M."/>
            <person name="Wawrzyn G.T."/>
            <person name="Choudhary S."/>
            <person name="Schmidt-Dannert C."/>
        </authorList>
    </citation>
    <scope>FUNCTION</scope>
    <scope>CATALYTIC ACTIVITY</scope>
    <scope>BIOPHYSICOCHEMICAL PROPERTIES</scope>
</reference>
<reference key="3">
    <citation type="journal article" date="2015" name="ChemBioChem">
        <title>Moonlighting metals: insights into regulation of cyclization pathways in fungal delta(6)-protoilludene sesquiterpene synthases.</title>
        <authorList>
            <person name="Quin M.B."/>
            <person name="Michel S.N."/>
            <person name="Schmidt-Dannert C."/>
        </authorList>
    </citation>
    <scope>FUNCTION</scope>
    <scope>DOMAIN</scope>
    <scope>CATALYTIC ACTIVITY</scope>
    <scope>COFACTOR</scope>
    <scope>BIOPHYSICOCHEMICAL PROPERTIES</scope>
    <scope>ACTIVITY REGULATION</scope>
</reference>
<proteinExistence type="evidence at protein level"/>
<keyword id="KW-0106">Calcium</keyword>
<keyword id="KW-0170">Cobalt</keyword>
<keyword id="KW-0456">Lyase</keyword>
<keyword id="KW-0460">Magnesium</keyword>
<keyword id="KW-0464">Manganese</keyword>
<keyword id="KW-0479">Metal-binding</keyword>
<keyword id="KW-0533">Nickel</keyword>
<keyword id="KW-1185">Reference proteome</keyword>
<accession>P9WEW1</accession>
<dbReference type="EC" id="4.2.3.-" evidence="4"/>
<dbReference type="EC" id="4.2.3.135" evidence="3 4"/>
<dbReference type="EC" id="4.2.3.198" evidence="4"/>
<dbReference type="EMBL" id="JH687393">
    <property type="protein sequence ID" value="EIM82223.1"/>
    <property type="status" value="ALT_SEQ"/>
    <property type="molecule type" value="Genomic_DNA"/>
</dbReference>
<dbReference type="RefSeq" id="XP_007308318.1">
    <property type="nucleotide sequence ID" value="XM_007308256.1"/>
</dbReference>
<dbReference type="SMR" id="P9WEW1"/>
<dbReference type="GeneID" id="18806156"/>
<dbReference type="KEGG" id="shs:STEHIDRAFT_64702"/>
<dbReference type="OrthoDB" id="6486656at2759"/>
<dbReference type="Proteomes" id="UP000053927">
    <property type="component" value="Unassembled WGS sequence"/>
</dbReference>
<dbReference type="GO" id="GO:0046872">
    <property type="term" value="F:metal ion binding"/>
    <property type="evidence" value="ECO:0007669"/>
    <property type="project" value="UniProtKB-KW"/>
</dbReference>
<dbReference type="GO" id="GO:0010333">
    <property type="term" value="F:terpene synthase activity"/>
    <property type="evidence" value="ECO:0007669"/>
    <property type="project" value="InterPro"/>
</dbReference>
<dbReference type="GO" id="GO:0008299">
    <property type="term" value="P:isoprenoid biosynthetic process"/>
    <property type="evidence" value="ECO:0007669"/>
    <property type="project" value="UniProtKB-ARBA"/>
</dbReference>
<dbReference type="Gene3D" id="1.10.600.10">
    <property type="entry name" value="Farnesyl Diphosphate Synthase"/>
    <property type="match status" value="1"/>
</dbReference>
<dbReference type="InterPro" id="IPR008949">
    <property type="entry name" value="Isoprenoid_synthase_dom_sf"/>
</dbReference>
<dbReference type="InterPro" id="IPR034686">
    <property type="entry name" value="Terpene_cyclase-like_2"/>
</dbReference>
<dbReference type="PANTHER" id="PTHR35201:SF4">
    <property type="entry name" value="BETA-PINACENE SYNTHASE-RELATED"/>
    <property type="match status" value="1"/>
</dbReference>
<dbReference type="PANTHER" id="PTHR35201">
    <property type="entry name" value="TERPENE SYNTHASE"/>
    <property type="match status" value="1"/>
</dbReference>
<dbReference type="Pfam" id="PF19086">
    <property type="entry name" value="Terpene_syn_C_2"/>
    <property type="match status" value="1"/>
</dbReference>
<dbReference type="SFLD" id="SFLDS00005">
    <property type="entry name" value="Isoprenoid_Synthase_Type_I"/>
    <property type="match status" value="1"/>
</dbReference>
<dbReference type="SFLD" id="SFLDG01020">
    <property type="entry name" value="Terpene_Cyclase_Like_2"/>
    <property type="match status" value="1"/>
</dbReference>
<dbReference type="SUPFAM" id="SSF48576">
    <property type="entry name" value="Terpenoid synthases"/>
    <property type="match status" value="1"/>
</dbReference>
<name>STS2_STEHR</name>
<feature type="chain" id="PRO_0000451255" description="Delta(6)-protoilludene synthase STEHIDRAFT_64702">
    <location>
        <begin position="1"/>
        <end position="350"/>
    </location>
</feature>
<feature type="short sequence motif" description="D(D/E)XX(D/E) motif" evidence="4">
    <location>
        <begin position="89"/>
        <end position="93"/>
    </location>
</feature>
<feature type="short sequence motif" description="NSE motif" evidence="4">
    <location>
        <begin position="225"/>
        <end position="233"/>
    </location>
</feature>
<feature type="binding site" evidence="2">
    <location>
        <position position="89"/>
    </location>
    <ligand>
        <name>Mg(2+)</name>
        <dbReference type="ChEBI" id="CHEBI:18420"/>
        <label>1</label>
    </ligand>
</feature>
<feature type="binding site" evidence="2">
    <location>
        <position position="89"/>
    </location>
    <ligand>
        <name>Mg(2+)</name>
        <dbReference type="ChEBI" id="CHEBI:18420"/>
        <label>2</label>
    </ligand>
</feature>
<feature type="binding site" evidence="2">
    <location>
        <position position="225"/>
    </location>
    <ligand>
        <name>Mg(2+)</name>
        <dbReference type="ChEBI" id="CHEBI:18420"/>
        <label>3</label>
    </ligand>
</feature>
<feature type="binding site" evidence="2">
    <location>
        <position position="229"/>
    </location>
    <ligand>
        <name>Mg(2+)</name>
        <dbReference type="ChEBI" id="CHEBI:18420"/>
        <label>3</label>
    </ligand>
</feature>
<feature type="binding site" evidence="2">
    <location>
        <position position="233"/>
    </location>
    <ligand>
        <name>Mg(2+)</name>
        <dbReference type="ChEBI" id="CHEBI:18420"/>
        <label>3</label>
    </ligand>
</feature>
<feature type="binding site" evidence="2">
    <location>
        <position position="314"/>
    </location>
    <ligand>
        <name>(2E,6E)-farnesyl diphosphate</name>
        <dbReference type="ChEBI" id="CHEBI:175763"/>
    </ligand>
</feature>
<feature type="binding site" evidence="2">
    <location>
        <position position="315"/>
    </location>
    <ligand>
        <name>(2E,6E)-farnesyl diphosphate</name>
        <dbReference type="ChEBI" id="CHEBI:175763"/>
    </ligand>
</feature>
<feature type="site" description="Plays a critical role in the stabilization of intermediate cation" evidence="1">
    <location>
        <position position="86"/>
    </location>
</feature>
<sequence>MVRSPVSDKFCIPDTLASWPYPRILNPHYAEEKAASAAWTKGFGAFGPKAQDAFDRCDFNLLACLAYPIATPERCRSGCDLMNLFFVIDEHSDTHGEETVRKMKDVVMDAIRNPHKPRPNDEWIGGEIARQFWERAMCYASEISQRRFIDTFDEYLESVVDQAADRDSARIRDIESYINIRRNTIGAKPSFVIMEQGMDIPDNVFENEVFQRLRMATIDMLCLGNDIVSYNIEQARGDDSHNIVRIVMNELDTDVPRAMDWVAQRHTQLEREFFTALSELPTWGEPIDGWVKEYVYGLGNWVRANDQWSFESQRYFGTKGMEIMKSRWLSVLPKVRPAEVGPQLVDQSLL</sequence>
<evidence type="ECO:0000250" key="1">
    <source>
        <dbReference type="UniProtKB" id="B5HDJ6"/>
    </source>
</evidence>
<evidence type="ECO:0000250" key="2">
    <source>
        <dbReference type="UniProtKB" id="Q9UR08"/>
    </source>
</evidence>
<evidence type="ECO:0000269" key="3">
    <source>
    </source>
</evidence>
<evidence type="ECO:0000269" key="4">
    <source>
    </source>
</evidence>
<evidence type="ECO:0000303" key="5">
    <source>
    </source>
</evidence>
<evidence type="ECO:0000305" key="6"/>
<organism>
    <name type="scientific">Stereum hirsutum (strain FP-91666)</name>
    <name type="common">White-rot fungus</name>
    <dbReference type="NCBI Taxonomy" id="721885"/>
    <lineage>
        <taxon>Eukaryota</taxon>
        <taxon>Fungi</taxon>
        <taxon>Dikarya</taxon>
        <taxon>Basidiomycota</taxon>
        <taxon>Agaricomycotina</taxon>
        <taxon>Agaricomycetes</taxon>
        <taxon>Russulales</taxon>
        <taxon>Stereaceae</taxon>
        <taxon>Stereum</taxon>
    </lineage>
</organism>